<feature type="chain" id="PRO_0000279192" description="F-box protein COS111">
    <location>
        <begin position="1"/>
        <end position="743"/>
    </location>
</feature>
<feature type="domain" description="F-box">
    <location>
        <begin position="145"/>
        <end position="191"/>
    </location>
</feature>
<feature type="region of interest" description="Disordered" evidence="2">
    <location>
        <begin position="224"/>
        <end position="257"/>
    </location>
</feature>
<feature type="region of interest" description="Disordered" evidence="2">
    <location>
        <begin position="311"/>
        <end position="330"/>
    </location>
</feature>
<feature type="compositionally biased region" description="Acidic residues" evidence="2">
    <location>
        <begin position="229"/>
        <end position="248"/>
    </location>
</feature>
<name>CS111_CANAL</name>
<sequence length="743" mass="85000">MLKTDSLDFHSYLPPYRSLINPNARYDYRTHSLIPLTQNDLNLLRIAFQKKKEAPPSAFKMKYKSLLSDVSRTISMRLSNSNLLSSSSANNNNVLLSPPPSSSSTLSTPCGNILNRAGTTSSNISKINNLSQNQTQNQLPLFPAELHIKNLPVEILDYIFYLVDDNLDYKSCMYTCKLFYFLAKPYYYENLVFTSTYRFAQFVTYLRVNSEVGQYVQSIDLSGIKPGYDEDEQEEGQEENAENGEEENGGGARDPQYLLGEIADNPHHERVDQFPRGKILAGWRDWKFKNNPLYTIHPSPSLTKIASNSQFSNVSSKSSRSTSSKSSSSTTKKFVKPFRYFKSRKRKMSYSGTTKLERKSPRLEQLQLDQYSSNWNKRVNSHPLINKFLLHYSTSKDLPIGYILHMINLCPNIVSLNLGNLSLSTDYEISRSTIHKYQNFDLINNYPKDLIYKVDNIMRLNDVDDVYSIDGSILRFGNINSGSSGSNWERNGSSSNNRILFKSNQSIASTASSVYSVTTFSKPIRKYNSLLPPLPQTVADISYLNKGDGKVYLSDLNLKEINSAYLKKINEDEILSAIINVHGKRLIEYDTSLYQIPKPLNVDIAGTLKYINLSSMIWLNRKLIEKFLTRLLTKKSPELDMYGICYTDEFFDSDEQESDDDYEDSDDEEQRQCPIIYKQNLVIDFTDSGMYKSLPWAKRIDLNSFEGCQLANKIINNDLMTPQEQALRRERRRRGAIAANYLA</sequence>
<evidence type="ECO:0000250" key="1"/>
<evidence type="ECO:0000256" key="2">
    <source>
        <dbReference type="SAM" id="MobiDB-lite"/>
    </source>
</evidence>
<protein>
    <recommendedName>
        <fullName>F-box protein COS111</fullName>
    </recommendedName>
</protein>
<dbReference type="EMBL" id="CP017623">
    <property type="protein sequence ID" value="AOW26644.1"/>
    <property type="molecule type" value="Genomic_DNA"/>
</dbReference>
<dbReference type="RefSeq" id="XP_723566.1">
    <property type="nucleotide sequence ID" value="XM_718473.2"/>
</dbReference>
<dbReference type="STRING" id="237561.Q5APS5"/>
<dbReference type="EnsemblFungi" id="C1_10140C_A-T">
    <property type="protein sequence ID" value="C1_10140C_A-T-p1"/>
    <property type="gene ID" value="C1_10140C_A"/>
</dbReference>
<dbReference type="GeneID" id="3634780"/>
<dbReference type="KEGG" id="cal:CAALFM_C110140CA"/>
<dbReference type="CGD" id="CAL0000176152">
    <property type="gene designation" value="orf19.12346"/>
</dbReference>
<dbReference type="VEuPathDB" id="FungiDB:C1_10140C_A"/>
<dbReference type="eggNOG" id="ENOG502R67H">
    <property type="taxonomic scope" value="Eukaryota"/>
</dbReference>
<dbReference type="HOGENOM" id="CLU_394915_0_0_1"/>
<dbReference type="InParanoid" id="Q5APS5"/>
<dbReference type="OrthoDB" id="5351126at2759"/>
<dbReference type="PRO" id="PR:Q5APS5"/>
<dbReference type="Proteomes" id="UP000000559">
    <property type="component" value="Chromosome 1"/>
</dbReference>
<dbReference type="InterPro" id="IPR036047">
    <property type="entry name" value="F-box-like_dom_sf"/>
</dbReference>
<dbReference type="SUPFAM" id="SSF81383">
    <property type="entry name" value="F-box domain"/>
    <property type="match status" value="1"/>
</dbReference>
<keyword id="KW-1185">Reference proteome</keyword>
<keyword id="KW-0833">Ubl conjugation pathway</keyword>
<proteinExistence type="inferred from homology"/>
<reference key="1">
    <citation type="journal article" date="2004" name="Proc. Natl. Acad. Sci. U.S.A.">
        <title>The diploid genome sequence of Candida albicans.</title>
        <authorList>
            <person name="Jones T."/>
            <person name="Federspiel N.A."/>
            <person name="Chibana H."/>
            <person name="Dungan J."/>
            <person name="Kalman S."/>
            <person name="Magee B.B."/>
            <person name="Newport G."/>
            <person name="Thorstenson Y.R."/>
            <person name="Agabian N."/>
            <person name="Magee P.T."/>
            <person name="Davis R.W."/>
            <person name="Scherer S."/>
        </authorList>
    </citation>
    <scope>NUCLEOTIDE SEQUENCE [LARGE SCALE GENOMIC DNA]</scope>
    <source>
        <strain>SC5314 / ATCC MYA-2876</strain>
    </source>
</reference>
<reference key="2">
    <citation type="journal article" date="2007" name="Genome Biol.">
        <title>Assembly of the Candida albicans genome into sixteen supercontigs aligned on the eight chromosomes.</title>
        <authorList>
            <person name="van het Hoog M."/>
            <person name="Rast T.J."/>
            <person name="Martchenko M."/>
            <person name="Grindle S."/>
            <person name="Dignard D."/>
            <person name="Hogues H."/>
            <person name="Cuomo C."/>
            <person name="Berriman M."/>
            <person name="Scherer S."/>
            <person name="Magee B.B."/>
            <person name="Whiteway M."/>
            <person name="Chibana H."/>
            <person name="Nantel A."/>
            <person name="Magee P.T."/>
        </authorList>
    </citation>
    <scope>GENOME REANNOTATION</scope>
    <source>
        <strain>SC5314 / ATCC MYA-2876</strain>
    </source>
</reference>
<reference key="3">
    <citation type="journal article" date="2013" name="Genome Biol.">
        <title>Assembly of a phased diploid Candida albicans genome facilitates allele-specific measurements and provides a simple model for repeat and indel structure.</title>
        <authorList>
            <person name="Muzzey D."/>
            <person name="Schwartz K."/>
            <person name="Weissman J.S."/>
            <person name="Sherlock G."/>
        </authorList>
    </citation>
    <scope>NUCLEOTIDE SEQUENCE [LARGE SCALE GENOMIC DNA]</scope>
    <scope>GENOME REANNOTATION</scope>
    <source>
        <strain>SC5314 / ATCC MYA-2876</strain>
    </source>
</reference>
<comment type="function">
    <text evidence="1">F-box protein probably involved in ubiquitin conjugation pathway.</text>
</comment>
<organism>
    <name type="scientific">Candida albicans (strain SC5314 / ATCC MYA-2876)</name>
    <name type="common">Yeast</name>
    <dbReference type="NCBI Taxonomy" id="237561"/>
    <lineage>
        <taxon>Eukaryota</taxon>
        <taxon>Fungi</taxon>
        <taxon>Dikarya</taxon>
        <taxon>Ascomycota</taxon>
        <taxon>Saccharomycotina</taxon>
        <taxon>Pichiomycetes</taxon>
        <taxon>Debaryomycetaceae</taxon>
        <taxon>Candida/Lodderomyces clade</taxon>
        <taxon>Candida</taxon>
    </lineage>
</organism>
<accession>Q5APS5</accession>
<accession>A0A1D8PES1</accession>
<accession>Q5AP82</accession>
<gene>
    <name type="primary">COS111</name>
    <name type="ordered locus">CAALFM_C110140CA</name>
    <name type="ORF">CaO19.12346</name>
    <name type="ORF">CaO19.4883</name>
</gene>